<proteinExistence type="inferred from homology"/>
<comment type="function">
    <text evidence="1">Catalyzes the conversion of dethiobiotin (DTB) to biotin by the insertion of a sulfur atom into dethiobiotin via a radical-based mechanism.</text>
</comment>
<comment type="catalytic activity">
    <reaction evidence="1">
        <text>(4R,5S)-dethiobiotin + (sulfur carrier)-SH + 2 reduced [2Fe-2S]-[ferredoxin] + 2 S-adenosyl-L-methionine = (sulfur carrier)-H + biotin + 2 5'-deoxyadenosine + 2 L-methionine + 2 oxidized [2Fe-2S]-[ferredoxin]</text>
        <dbReference type="Rhea" id="RHEA:22060"/>
        <dbReference type="Rhea" id="RHEA-COMP:10000"/>
        <dbReference type="Rhea" id="RHEA-COMP:10001"/>
        <dbReference type="Rhea" id="RHEA-COMP:14737"/>
        <dbReference type="Rhea" id="RHEA-COMP:14739"/>
        <dbReference type="ChEBI" id="CHEBI:17319"/>
        <dbReference type="ChEBI" id="CHEBI:29917"/>
        <dbReference type="ChEBI" id="CHEBI:33737"/>
        <dbReference type="ChEBI" id="CHEBI:33738"/>
        <dbReference type="ChEBI" id="CHEBI:57586"/>
        <dbReference type="ChEBI" id="CHEBI:57844"/>
        <dbReference type="ChEBI" id="CHEBI:59789"/>
        <dbReference type="ChEBI" id="CHEBI:64428"/>
        <dbReference type="ChEBI" id="CHEBI:149473"/>
        <dbReference type="EC" id="2.8.1.6"/>
    </reaction>
</comment>
<comment type="cofactor">
    <cofactor evidence="1">
        <name>[4Fe-4S] cluster</name>
        <dbReference type="ChEBI" id="CHEBI:49883"/>
    </cofactor>
    <text evidence="1">Binds 1 [4Fe-4S] cluster. The cluster is coordinated with 3 cysteines and an exchangeable S-adenosyl-L-methionine.</text>
</comment>
<comment type="cofactor">
    <cofactor evidence="1">
        <name>[2Fe-2S] cluster</name>
        <dbReference type="ChEBI" id="CHEBI:190135"/>
    </cofactor>
    <text evidence="1">Binds 1 [2Fe-2S] cluster. The cluster is coordinated with 3 cysteines and 1 arginine.</text>
</comment>
<comment type="pathway">
    <text evidence="1">Cofactor biosynthesis; biotin biosynthesis; biotin from 7,8-diaminononanoate: step 2/2.</text>
</comment>
<comment type="subunit">
    <text evidence="1">Homodimer.</text>
</comment>
<comment type="similarity">
    <text evidence="1">Belongs to the radical SAM superfamily. Biotin synthase family.</text>
</comment>
<organism>
    <name type="scientific">Salinispora tropica (strain ATCC BAA-916 / DSM 44818 / JCM 13857 / NBRC 105044 / CNB-440)</name>
    <dbReference type="NCBI Taxonomy" id="369723"/>
    <lineage>
        <taxon>Bacteria</taxon>
        <taxon>Bacillati</taxon>
        <taxon>Actinomycetota</taxon>
        <taxon>Actinomycetes</taxon>
        <taxon>Micromonosporales</taxon>
        <taxon>Micromonosporaceae</taxon>
        <taxon>Salinispora</taxon>
    </lineage>
</organism>
<name>BIOB_SALTO</name>
<feature type="chain" id="PRO_0000381610" description="Biotin synthase">
    <location>
        <begin position="1"/>
        <end position="331"/>
    </location>
</feature>
<feature type="domain" description="Radical SAM core" evidence="2">
    <location>
        <begin position="52"/>
        <end position="277"/>
    </location>
</feature>
<feature type="binding site" evidence="1">
    <location>
        <position position="67"/>
    </location>
    <ligand>
        <name>[4Fe-4S] cluster</name>
        <dbReference type="ChEBI" id="CHEBI:49883"/>
        <note>4Fe-4S-S-AdoMet</note>
    </ligand>
</feature>
<feature type="binding site" evidence="1">
    <location>
        <position position="71"/>
    </location>
    <ligand>
        <name>[4Fe-4S] cluster</name>
        <dbReference type="ChEBI" id="CHEBI:49883"/>
        <note>4Fe-4S-S-AdoMet</note>
    </ligand>
</feature>
<feature type="binding site" evidence="1">
    <location>
        <position position="74"/>
    </location>
    <ligand>
        <name>[4Fe-4S] cluster</name>
        <dbReference type="ChEBI" id="CHEBI:49883"/>
        <note>4Fe-4S-S-AdoMet</note>
    </ligand>
</feature>
<feature type="binding site" evidence="1">
    <location>
        <position position="110"/>
    </location>
    <ligand>
        <name>[2Fe-2S] cluster</name>
        <dbReference type="ChEBI" id="CHEBI:190135"/>
    </ligand>
</feature>
<feature type="binding site" evidence="1">
    <location>
        <position position="202"/>
    </location>
    <ligand>
        <name>[2Fe-2S] cluster</name>
        <dbReference type="ChEBI" id="CHEBI:190135"/>
    </ligand>
</feature>
<feature type="binding site" evidence="1">
    <location>
        <position position="272"/>
    </location>
    <ligand>
        <name>[2Fe-2S] cluster</name>
        <dbReference type="ChEBI" id="CHEBI:190135"/>
    </ligand>
</feature>
<reference key="1">
    <citation type="journal article" date="2007" name="Proc. Natl. Acad. Sci. U.S.A.">
        <title>Genome sequencing reveals complex secondary metabolome in the marine actinomycete Salinispora tropica.</title>
        <authorList>
            <person name="Udwary D.W."/>
            <person name="Zeigler L."/>
            <person name="Asolkar R.N."/>
            <person name="Singan V."/>
            <person name="Lapidus A."/>
            <person name="Fenical W."/>
            <person name="Jensen P.R."/>
            <person name="Moore B.S."/>
        </authorList>
    </citation>
    <scope>NUCLEOTIDE SEQUENCE [LARGE SCALE GENOMIC DNA]</scope>
    <source>
        <strain>ATCC BAA-916 / DSM 44818 / JCM 13857 / NBRC 105044 / CNB-440</strain>
    </source>
</reference>
<accession>A4X585</accession>
<gene>
    <name evidence="1" type="primary">bioB</name>
    <name type="ordered locus">Strop_1569</name>
</gene>
<dbReference type="EC" id="2.8.1.6" evidence="1"/>
<dbReference type="EMBL" id="CP000667">
    <property type="protein sequence ID" value="ABP54035.1"/>
    <property type="molecule type" value="Genomic_DNA"/>
</dbReference>
<dbReference type="RefSeq" id="WP_011905467.1">
    <property type="nucleotide sequence ID" value="NC_009380.1"/>
</dbReference>
<dbReference type="SMR" id="A4X585"/>
<dbReference type="STRING" id="369723.Strop_1569"/>
<dbReference type="KEGG" id="stp:Strop_1569"/>
<dbReference type="PATRIC" id="fig|369723.5.peg.1605"/>
<dbReference type="eggNOG" id="COG0502">
    <property type="taxonomic scope" value="Bacteria"/>
</dbReference>
<dbReference type="HOGENOM" id="CLU_033172_2_1_11"/>
<dbReference type="UniPathway" id="UPA00078">
    <property type="reaction ID" value="UER00162"/>
</dbReference>
<dbReference type="Proteomes" id="UP000000235">
    <property type="component" value="Chromosome"/>
</dbReference>
<dbReference type="GO" id="GO:0051537">
    <property type="term" value="F:2 iron, 2 sulfur cluster binding"/>
    <property type="evidence" value="ECO:0007669"/>
    <property type="project" value="UniProtKB-KW"/>
</dbReference>
<dbReference type="GO" id="GO:0051539">
    <property type="term" value="F:4 iron, 4 sulfur cluster binding"/>
    <property type="evidence" value="ECO:0007669"/>
    <property type="project" value="UniProtKB-KW"/>
</dbReference>
<dbReference type="GO" id="GO:0004076">
    <property type="term" value="F:biotin synthase activity"/>
    <property type="evidence" value="ECO:0007669"/>
    <property type="project" value="UniProtKB-UniRule"/>
</dbReference>
<dbReference type="GO" id="GO:0005506">
    <property type="term" value="F:iron ion binding"/>
    <property type="evidence" value="ECO:0007669"/>
    <property type="project" value="UniProtKB-UniRule"/>
</dbReference>
<dbReference type="GO" id="GO:0009102">
    <property type="term" value="P:biotin biosynthetic process"/>
    <property type="evidence" value="ECO:0007669"/>
    <property type="project" value="UniProtKB-UniRule"/>
</dbReference>
<dbReference type="CDD" id="cd01335">
    <property type="entry name" value="Radical_SAM"/>
    <property type="match status" value="1"/>
</dbReference>
<dbReference type="FunFam" id="3.20.20.70:FF:000026">
    <property type="entry name" value="Biotin synthase"/>
    <property type="match status" value="1"/>
</dbReference>
<dbReference type="Gene3D" id="3.20.20.70">
    <property type="entry name" value="Aldolase class I"/>
    <property type="match status" value="1"/>
</dbReference>
<dbReference type="HAMAP" id="MF_01694">
    <property type="entry name" value="BioB"/>
    <property type="match status" value="1"/>
</dbReference>
<dbReference type="InterPro" id="IPR013785">
    <property type="entry name" value="Aldolase_TIM"/>
</dbReference>
<dbReference type="InterPro" id="IPR010722">
    <property type="entry name" value="BATS_dom"/>
</dbReference>
<dbReference type="InterPro" id="IPR002684">
    <property type="entry name" value="Biotin_synth/BioAB"/>
</dbReference>
<dbReference type="InterPro" id="IPR024177">
    <property type="entry name" value="Biotin_synthase"/>
</dbReference>
<dbReference type="InterPro" id="IPR006638">
    <property type="entry name" value="Elp3/MiaA/NifB-like_rSAM"/>
</dbReference>
<dbReference type="InterPro" id="IPR007197">
    <property type="entry name" value="rSAM"/>
</dbReference>
<dbReference type="NCBIfam" id="TIGR00433">
    <property type="entry name" value="bioB"/>
    <property type="match status" value="1"/>
</dbReference>
<dbReference type="PANTHER" id="PTHR22976">
    <property type="entry name" value="BIOTIN SYNTHASE"/>
    <property type="match status" value="1"/>
</dbReference>
<dbReference type="PANTHER" id="PTHR22976:SF2">
    <property type="entry name" value="BIOTIN SYNTHASE, MITOCHONDRIAL"/>
    <property type="match status" value="1"/>
</dbReference>
<dbReference type="Pfam" id="PF06968">
    <property type="entry name" value="BATS"/>
    <property type="match status" value="1"/>
</dbReference>
<dbReference type="Pfam" id="PF04055">
    <property type="entry name" value="Radical_SAM"/>
    <property type="match status" value="1"/>
</dbReference>
<dbReference type="PIRSF" id="PIRSF001619">
    <property type="entry name" value="Biotin_synth"/>
    <property type="match status" value="1"/>
</dbReference>
<dbReference type="SFLD" id="SFLDG01278">
    <property type="entry name" value="biotin_synthase_like"/>
    <property type="match status" value="1"/>
</dbReference>
<dbReference type="SFLD" id="SFLDS00029">
    <property type="entry name" value="Radical_SAM"/>
    <property type="match status" value="1"/>
</dbReference>
<dbReference type="SMART" id="SM00876">
    <property type="entry name" value="BATS"/>
    <property type="match status" value="1"/>
</dbReference>
<dbReference type="SMART" id="SM00729">
    <property type="entry name" value="Elp3"/>
    <property type="match status" value="1"/>
</dbReference>
<dbReference type="SUPFAM" id="SSF102114">
    <property type="entry name" value="Radical SAM enzymes"/>
    <property type="match status" value="1"/>
</dbReference>
<dbReference type="PROSITE" id="PS51918">
    <property type="entry name" value="RADICAL_SAM"/>
    <property type="match status" value="1"/>
</dbReference>
<keyword id="KW-0001">2Fe-2S</keyword>
<keyword id="KW-0004">4Fe-4S</keyword>
<keyword id="KW-0093">Biotin biosynthesis</keyword>
<keyword id="KW-0408">Iron</keyword>
<keyword id="KW-0411">Iron-sulfur</keyword>
<keyword id="KW-0479">Metal-binding</keyword>
<keyword id="KW-1185">Reference proteome</keyword>
<keyword id="KW-0949">S-adenosyl-L-methionine</keyword>
<keyword id="KW-0808">Transferase</keyword>
<protein>
    <recommendedName>
        <fullName evidence="1">Biotin synthase</fullName>
        <ecNumber evidence="1">2.8.1.6</ecNumber>
    </recommendedName>
</protein>
<sequence length="331" mass="35928">MPEILDQARTQVLENGVGLDEAGVLAVLNLPDEHLPAALQLAHEVRMRWCGPEVEVEGIVSLKTGGCPEDCHFCSQSGLFTSPVRAVWLDIPSLVEAAKQTAKTGATEFCIVAAVRGPDDRLMRQLREGVAAIQAEVDIQVAASVGMLTQEQVDELVEMGVHRYNHNLETCRSYFPNVVTTHSWEERWETLRMVRESGMEVCCGGILGLGESVEQRAEFAAQLAELDPHEVPLNFLNPRPGTPLGDRSVVEGKDALRAIAAFRLAMPRTILRYAGGRELTLGDLGTRSGLLGGINAVIVGNYLTTLGRPATTDLELLEDLKMPVKALSATL</sequence>
<evidence type="ECO:0000255" key="1">
    <source>
        <dbReference type="HAMAP-Rule" id="MF_01694"/>
    </source>
</evidence>
<evidence type="ECO:0000255" key="2">
    <source>
        <dbReference type="PROSITE-ProRule" id="PRU01266"/>
    </source>
</evidence>